<dbReference type="EC" id="7.5.2.3" evidence="2"/>
<dbReference type="EMBL" id="AE017223">
    <property type="protein sequence ID" value="AAX74354.1"/>
    <property type="molecule type" value="Genomic_DNA"/>
</dbReference>
<dbReference type="SMR" id="P0C529"/>
<dbReference type="EnsemblBacteria" id="AAX74354">
    <property type="protein sequence ID" value="AAX74354"/>
    <property type="gene ID" value="BruAb1_1004"/>
</dbReference>
<dbReference type="KEGG" id="bmb:BruAb1_1004"/>
<dbReference type="HOGENOM" id="CLU_000604_84_3_5"/>
<dbReference type="Proteomes" id="UP000000540">
    <property type="component" value="Chromosome I"/>
</dbReference>
<dbReference type="GO" id="GO:0005886">
    <property type="term" value="C:plasma membrane"/>
    <property type="evidence" value="ECO:0007669"/>
    <property type="project" value="UniProtKB-SubCell"/>
</dbReference>
<dbReference type="GO" id="GO:0015441">
    <property type="term" value="F:ABC-type beta-glucan transporter activity"/>
    <property type="evidence" value="ECO:0007669"/>
    <property type="project" value="UniProtKB-EC"/>
</dbReference>
<dbReference type="GO" id="GO:0005524">
    <property type="term" value="F:ATP binding"/>
    <property type="evidence" value="ECO:0007669"/>
    <property type="project" value="UniProtKB-KW"/>
</dbReference>
<dbReference type="GO" id="GO:0016887">
    <property type="term" value="F:ATP hydrolysis activity"/>
    <property type="evidence" value="ECO:0007669"/>
    <property type="project" value="InterPro"/>
</dbReference>
<dbReference type="GO" id="GO:0034040">
    <property type="term" value="F:ATPase-coupled lipid transmembrane transporter activity"/>
    <property type="evidence" value="ECO:0007669"/>
    <property type="project" value="TreeGrafter"/>
</dbReference>
<dbReference type="CDD" id="cd18562">
    <property type="entry name" value="ABC_6TM_NdvA_beta-glucan_exporter_like"/>
    <property type="match status" value="1"/>
</dbReference>
<dbReference type="FunFam" id="1.20.1560.10:FF:000182">
    <property type="entry name" value="Beta-(1--&gt;2)glucan export ATP-binding/permease protein NdvA"/>
    <property type="match status" value="1"/>
</dbReference>
<dbReference type="FunFam" id="3.40.50.300:FF:000221">
    <property type="entry name" value="Multidrug ABC transporter ATP-binding protein"/>
    <property type="match status" value="1"/>
</dbReference>
<dbReference type="Gene3D" id="1.20.1560.10">
    <property type="entry name" value="ABC transporter type 1, transmembrane domain"/>
    <property type="match status" value="1"/>
</dbReference>
<dbReference type="Gene3D" id="3.40.50.300">
    <property type="entry name" value="P-loop containing nucleotide triphosphate hydrolases"/>
    <property type="match status" value="1"/>
</dbReference>
<dbReference type="InterPro" id="IPR003593">
    <property type="entry name" value="AAA+_ATPase"/>
</dbReference>
<dbReference type="InterPro" id="IPR011527">
    <property type="entry name" value="ABC1_TM_dom"/>
</dbReference>
<dbReference type="InterPro" id="IPR036640">
    <property type="entry name" value="ABC1_TM_sf"/>
</dbReference>
<dbReference type="InterPro" id="IPR003439">
    <property type="entry name" value="ABC_transporter-like_ATP-bd"/>
</dbReference>
<dbReference type="InterPro" id="IPR017871">
    <property type="entry name" value="ABC_transporter-like_CS"/>
</dbReference>
<dbReference type="InterPro" id="IPR005896">
    <property type="entry name" value="NdvA"/>
</dbReference>
<dbReference type="InterPro" id="IPR027417">
    <property type="entry name" value="P-loop_NTPase"/>
</dbReference>
<dbReference type="InterPro" id="IPR039421">
    <property type="entry name" value="Type_1_exporter"/>
</dbReference>
<dbReference type="NCBIfam" id="TIGR01192">
    <property type="entry name" value="chvA"/>
    <property type="match status" value="1"/>
</dbReference>
<dbReference type="NCBIfam" id="NF010178">
    <property type="entry name" value="PRK13657.1"/>
    <property type="match status" value="1"/>
</dbReference>
<dbReference type="PANTHER" id="PTHR24221">
    <property type="entry name" value="ATP-BINDING CASSETTE SUB-FAMILY B"/>
    <property type="match status" value="1"/>
</dbReference>
<dbReference type="PANTHER" id="PTHR24221:SF654">
    <property type="entry name" value="ATP-BINDING CASSETTE SUB-FAMILY B MEMBER 6"/>
    <property type="match status" value="1"/>
</dbReference>
<dbReference type="Pfam" id="PF00664">
    <property type="entry name" value="ABC_membrane"/>
    <property type="match status" value="1"/>
</dbReference>
<dbReference type="Pfam" id="PF00005">
    <property type="entry name" value="ABC_tran"/>
    <property type="match status" value="1"/>
</dbReference>
<dbReference type="SMART" id="SM00382">
    <property type="entry name" value="AAA"/>
    <property type="match status" value="1"/>
</dbReference>
<dbReference type="SUPFAM" id="SSF90123">
    <property type="entry name" value="ABC transporter transmembrane region"/>
    <property type="match status" value="1"/>
</dbReference>
<dbReference type="SUPFAM" id="SSF52540">
    <property type="entry name" value="P-loop containing nucleoside triphosphate hydrolases"/>
    <property type="match status" value="1"/>
</dbReference>
<dbReference type="PROSITE" id="PS50929">
    <property type="entry name" value="ABC_TM1F"/>
    <property type="match status" value="1"/>
</dbReference>
<dbReference type="PROSITE" id="PS00211">
    <property type="entry name" value="ABC_TRANSPORTER_1"/>
    <property type="match status" value="1"/>
</dbReference>
<dbReference type="PROSITE" id="PS50893">
    <property type="entry name" value="ABC_TRANSPORTER_2"/>
    <property type="match status" value="1"/>
</dbReference>
<dbReference type="PROSITE" id="PS51317">
    <property type="entry name" value="NDVA"/>
    <property type="match status" value="1"/>
</dbReference>
<protein>
    <recommendedName>
        <fullName evidence="2">Beta-(1--&gt;2)glucan export ATP-binding/permease protein NdvA</fullName>
        <ecNumber evidence="2">7.5.2.3</ecNumber>
    </recommendedName>
</protein>
<organism>
    <name type="scientific">Brucella abortus biovar 1 (strain 9-941)</name>
    <dbReference type="NCBI Taxonomy" id="262698"/>
    <lineage>
        <taxon>Bacteria</taxon>
        <taxon>Pseudomonadati</taxon>
        <taxon>Pseudomonadota</taxon>
        <taxon>Alphaproteobacteria</taxon>
        <taxon>Hyphomicrobiales</taxon>
        <taxon>Brucellaceae</taxon>
        <taxon>Brucella/Ochrobactrum group</taxon>
        <taxon>Brucella</taxon>
    </lineage>
</organism>
<reference key="1">
    <citation type="journal article" date="2005" name="J. Bacteriol.">
        <title>Completion of the genome sequence of Brucella abortus and comparison to the highly similar genomes of Brucella melitensis and Brucella suis.</title>
        <authorList>
            <person name="Halling S.M."/>
            <person name="Peterson-Burch B.D."/>
            <person name="Bricker B.J."/>
            <person name="Zuerner R.L."/>
            <person name="Qing Z."/>
            <person name="Li L.-L."/>
            <person name="Kapur V."/>
            <person name="Alt D.P."/>
            <person name="Olsen S.C."/>
        </authorList>
    </citation>
    <scope>NUCLEOTIDE SEQUENCE [LARGE SCALE GENOMIC DNA]</scope>
    <source>
        <strain>9-941</strain>
    </source>
</reference>
<evidence type="ECO:0000250" key="1"/>
<evidence type="ECO:0000255" key="2">
    <source>
        <dbReference type="HAMAP-Rule" id="MF_01728"/>
    </source>
</evidence>
<proteinExistence type="inferred from homology"/>
<accession>P0C529</accession>
<accession>Q57DD0</accession>
<accession>Q844Y8</accession>
<comment type="function">
    <text evidence="1">Involved in beta-(1--&gt;2)glucan export. Transmembrane domains (TMD) form a pore in the inner membrane and the ATP-binding domain (NBD) is responsible for energy generation (By similarity).</text>
</comment>
<comment type="catalytic activity">
    <reaction evidence="2">
        <text>[(1-&gt;2)-beta-D-glucosyl](n)(in) + ATP + H2O = [(1-&gt;2)-beta-D-glucosyl](n)(out) + ADP + phosphate + H(+)</text>
        <dbReference type="Rhea" id="RHEA:18453"/>
        <dbReference type="Rhea" id="RHEA-COMP:11881"/>
        <dbReference type="ChEBI" id="CHEBI:15377"/>
        <dbReference type="ChEBI" id="CHEBI:15378"/>
        <dbReference type="ChEBI" id="CHEBI:27517"/>
        <dbReference type="ChEBI" id="CHEBI:30616"/>
        <dbReference type="ChEBI" id="CHEBI:43474"/>
        <dbReference type="ChEBI" id="CHEBI:456216"/>
        <dbReference type="EC" id="7.5.2.3"/>
    </reaction>
</comment>
<comment type="subunit">
    <text evidence="2">Homodimer.</text>
</comment>
<comment type="subcellular location">
    <subcellularLocation>
        <location evidence="2">Cell inner membrane</location>
        <topology evidence="2">Multi-pass membrane protein</topology>
    </subcellularLocation>
</comment>
<comment type="domain">
    <text>In NdvA the ATP-binding domain (NBD) and the transmembrane domain (TMD) are fused.</text>
</comment>
<comment type="similarity">
    <text evidence="2">Belongs to the ABC transporter superfamily. Beta-(1--&gt;2)glucan exporter (TC 3.A.1.108.1) family.</text>
</comment>
<name>NDVA_BRUAB</name>
<sequence length="599" mass="65951">MSLLKIYWRAMQYLAVERTATITMCVASVLVALVTLAEPVLFGRVIQSISDKGDIFSPLLMWAALGGFNIMAAVFVARGADRLAHRRRLGVMIDSYERLITMPLAWHQKRGTSNALHTLIRATDSLFTLWLEFMRQHLTTVVALATLIPVAMTMDMRMSLVLIVLGVIYVMIGQLVMRKTKDGQAAVEKHHHKLFEHVSDTISNVSVVQSYNRIASETQALRDYAKNLENAQFPVLNWWALASGLNRMASTFSMVVVLVLGAYFVTKGQMRVGDVIAFIGFAQLMIGRLDQISAFINQTVTARAKLEEFFQMEDATADRQEPENVADLNDVKGDIVFDNVTYEFPNSGQGVYDVSFEVKPGQTVAIVGPTGAGKTTLINLLQRVFDPAAGRIMIDGTDTRTVSRRSLRHAIATVFQDAGLFNRSVEDNIRVGRANATHEEVHAAAKAAAAHDFILAKSEGYDTFVGERGSQLSGGERQRLAIARAILKDSPILVLDEATSALDVETEEKVTQAVDELSHNRTTFIIAHRLSTVRSADLVLFMDKGHLVESGSFNELAERGGRFSDLLRAGGLKLEDKQPKQPVVEGSNVMPFPVKGAVA</sequence>
<gene>
    <name evidence="2" type="primary">ndvA</name>
    <name type="ordered locus">BruAb1_1004</name>
</gene>
<feature type="chain" id="PRO_0000290244" description="Beta-(1--&gt;2)glucan export ATP-binding/permease protein NdvA">
    <location>
        <begin position="1"/>
        <end position="599"/>
    </location>
</feature>
<feature type="transmembrane region" description="Helical" evidence="2">
    <location>
        <begin position="22"/>
        <end position="42"/>
    </location>
</feature>
<feature type="transmembrane region" description="Helical" evidence="2">
    <location>
        <begin position="55"/>
        <end position="75"/>
    </location>
</feature>
<feature type="transmembrane region" description="Helical" evidence="2">
    <location>
        <begin position="156"/>
        <end position="176"/>
    </location>
</feature>
<feature type="transmembrane region" description="Helical" evidence="2">
    <location>
        <begin position="248"/>
        <end position="268"/>
    </location>
</feature>
<feature type="transmembrane region" description="Helical" evidence="2">
    <location>
        <begin position="276"/>
        <end position="296"/>
    </location>
</feature>
<feature type="domain" description="ABC transmembrane type-1" evidence="2">
    <location>
        <begin position="21"/>
        <end position="301"/>
    </location>
</feature>
<feature type="domain" description="ABC transporter" evidence="2">
    <location>
        <begin position="335"/>
        <end position="569"/>
    </location>
</feature>
<feature type="binding site" evidence="2">
    <location>
        <begin position="368"/>
        <end position="375"/>
    </location>
    <ligand>
        <name>ATP</name>
        <dbReference type="ChEBI" id="CHEBI:30616"/>
    </ligand>
</feature>
<keyword id="KW-0067">ATP-binding</keyword>
<keyword id="KW-0997">Cell inner membrane</keyword>
<keyword id="KW-1003">Cell membrane</keyword>
<keyword id="KW-0472">Membrane</keyword>
<keyword id="KW-0547">Nucleotide-binding</keyword>
<keyword id="KW-0762">Sugar transport</keyword>
<keyword id="KW-1278">Translocase</keyword>
<keyword id="KW-0812">Transmembrane</keyword>
<keyword id="KW-1133">Transmembrane helix</keyword>
<keyword id="KW-0813">Transport</keyword>